<feature type="chain" id="PRO_0000148848" description="Aspartyl/glutamyl-tRNA(Asn/Gln) amidotransferase subunit B">
    <location>
        <begin position="1"/>
        <end position="480"/>
    </location>
</feature>
<name>GATB_STRPN</name>
<proteinExistence type="evidence at protein level"/>
<reference key="1">
    <citation type="journal article" date="2001" name="Science">
        <title>Complete genome sequence of a virulent isolate of Streptococcus pneumoniae.</title>
        <authorList>
            <person name="Tettelin H."/>
            <person name="Nelson K.E."/>
            <person name="Paulsen I.T."/>
            <person name="Eisen J.A."/>
            <person name="Read T.D."/>
            <person name="Peterson S.N."/>
            <person name="Heidelberg J.F."/>
            <person name="DeBoy R.T."/>
            <person name="Haft D.H."/>
            <person name="Dodson R.J."/>
            <person name="Durkin A.S."/>
            <person name="Gwinn M.L."/>
            <person name="Kolonay J.F."/>
            <person name="Nelson W.C."/>
            <person name="Peterson J.D."/>
            <person name="Umayam L.A."/>
            <person name="White O."/>
            <person name="Salzberg S.L."/>
            <person name="Lewis M.R."/>
            <person name="Radune D."/>
            <person name="Holtzapple E.K."/>
            <person name="Khouri H.M."/>
            <person name="Wolf A.M."/>
            <person name="Utterback T.R."/>
            <person name="Hansen C.L."/>
            <person name="McDonald L.A."/>
            <person name="Feldblyum T.V."/>
            <person name="Angiuoli S.V."/>
            <person name="Dickinson T."/>
            <person name="Hickey E.K."/>
            <person name="Holt I.E."/>
            <person name="Loftus B.J."/>
            <person name="Yang F."/>
            <person name="Smith H.O."/>
            <person name="Venter J.C."/>
            <person name="Dougherty B.A."/>
            <person name="Morrison D.A."/>
            <person name="Hollingshead S.K."/>
            <person name="Fraser C.M."/>
        </authorList>
    </citation>
    <scope>NUCLEOTIDE SEQUENCE [LARGE SCALE GENOMIC DNA]</scope>
    <source>
        <strain>ATCC BAA-334 / TIGR4</strain>
    </source>
</reference>
<evidence type="ECO:0000255" key="1">
    <source>
        <dbReference type="HAMAP-Rule" id="MF_00121"/>
    </source>
</evidence>
<gene>
    <name evidence="1" type="primary">gatB</name>
    <name type="ordered locus">SP_0436</name>
</gene>
<organism>
    <name type="scientific">Streptococcus pneumoniae serotype 4 (strain ATCC BAA-334 / TIGR4)</name>
    <dbReference type="NCBI Taxonomy" id="170187"/>
    <lineage>
        <taxon>Bacteria</taxon>
        <taxon>Bacillati</taxon>
        <taxon>Bacillota</taxon>
        <taxon>Bacilli</taxon>
        <taxon>Lactobacillales</taxon>
        <taxon>Streptococcaceae</taxon>
        <taxon>Streptococcus</taxon>
    </lineage>
</organism>
<sequence>MNFETVIGLEVHVELNTNSKIFSPTSAHFGNDQNANTNVIDWSFPGVLPVLNKGVVDAGIKAALALNMDIHKKMHFDRKNYFYPDNPKAYQISQFDEPIGYNGWIEVKLEDGTTKKIGIERAHLEEDAGKNTHGTDGYSYVDLNRQGVPLIEIVSEADMRSPEEAYAYLTALKEVIQYAGISDVKMEEGSMRVDANISLRPYGQEKFGTKTELKNLNSFSNVRKGLEYEVQRQAEILRSGGQIRQETRRYDEANKATILMRVKEGAADYRYFPEPDLPLFEISDEWIEEMRTELPEFPKERRARYVSDLGLSDYDASQLTANKVTSDFFEKAVALGGDAKQVSNWLQGEVAQFLNAEGKTLEQIELTPENLVEMIAIIEDGTISSKIAKKVFVHLAKNGGGAREYVEKAGMVQISDPAILIPIIHQVFADNEAAVADFKSGKRNADKAFTGFLMKATKGQANPQVALKLLAQELAKLKEN</sequence>
<accession>Q97SE7</accession>
<keyword id="KW-0067">ATP-binding</keyword>
<keyword id="KW-0436">Ligase</keyword>
<keyword id="KW-0547">Nucleotide-binding</keyword>
<keyword id="KW-0648">Protein biosynthesis</keyword>
<keyword id="KW-1185">Reference proteome</keyword>
<dbReference type="EC" id="6.3.5.-" evidence="1"/>
<dbReference type="EMBL" id="AE005672">
    <property type="protein sequence ID" value="AAK74598.1"/>
    <property type="molecule type" value="Genomic_DNA"/>
</dbReference>
<dbReference type="PIR" id="E95050">
    <property type="entry name" value="E95050"/>
</dbReference>
<dbReference type="RefSeq" id="WP_001008681.1">
    <property type="nucleotide sequence ID" value="NZ_CP155539.1"/>
</dbReference>
<dbReference type="SMR" id="Q97SE7"/>
<dbReference type="IntAct" id="Q97SE7">
    <property type="interactions" value="7"/>
</dbReference>
<dbReference type="PaxDb" id="170187-SP_0436"/>
<dbReference type="EnsemblBacteria" id="AAK74598">
    <property type="protein sequence ID" value="AAK74598"/>
    <property type="gene ID" value="SP_0436"/>
</dbReference>
<dbReference type="KEGG" id="spn:SP_0436"/>
<dbReference type="eggNOG" id="COG0064">
    <property type="taxonomic scope" value="Bacteria"/>
</dbReference>
<dbReference type="PhylomeDB" id="Q97SE7"/>
<dbReference type="BioCyc" id="SPNE170187:G1FZB-451-MONOMER"/>
<dbReference type="Proteomes" id="UP000000585">
    <property type="component" value="Chromosome"/>
</dbReference>
<dbReference type="GO" id="GO:0050566">
    <property type="term" value="F:asparaginyl-tRNA synthase (glutamine-hydrolyzing) activity"/>
    <property type="evidence" value="ECO:0007669"/>
    <property type="project" value="RHEA"/>
</dbReference>
<dbReference type="GO" id="GO:0005524">
    <property type="term" value="F:ATP binding"/>
    <property type="evidence" value="ECO:0007669"/>
    <property type="project" value="UniProtKB-KW"/>
</dbReference>
<dbReference type="GO" id="GO:0050567">
    <property type="term" value="F:glutaminyl-tRNA synthase (glutamine-hydrolyzing) activity"/>
    <property type="evidence" value="ECO:0007669"/>
    <property type="project" value="UniProtKB-UniRule"/>
</dbReference>
<dbReference type="GO" id="GO:0070681">
    <property type="term" value="P:glutaminyl-tRNAGln biosynthesis via transamidation"/>
    <property type="evidence" value="ECO:0007669"/>
    <property type="project" value="TreeGrafter"/>
</dbReference>
<dbReference type="GO" id="GO:0006412">
    <property type="term" value="P:translation"/>
    <property type="evidence" value="ECO:0007669"/>
    <property type="project" value="UniProtKB-UniRule"/>
</dbReference>
<dbReference type="FunFam" id="1.10.10.410:FF:000001">
    <property type="entry name" value="Aspartyl/glutamyl-tRNA(Asn/Gln) amidotransferase subunit B"/>
    <property type="match status" value="1"/>
</dbReference>
<dbReference type="FunFam" id="1.10.150.380:FF:000001">
    <property type="entry name" value="Aspartyl/glutamyl-tRNA(Asn/Gln) amidotransferase subunit B"/>
    <property type="match status" value="1"/>
</dbReference>
<dbReference type="Gene3D" id="1.10.10.410">
    <property type="match status" value="1"/>
</dbReference>
<dbReference type="Gene3D" id="1.10.150.380">
    <property type="entry name" value="GatB domain, N-terminal subdomain"/>
    <property type="match status" value="1"/>
</dbReference>
<dbReference type="HAMAP" id="MF_00121">
    <property type="entry name" value="GatB"/>
    <property type="match status" value="1"/>
</dbReference>
<dbReference type="InterPro" id="IPR017959">
    <property type="entry name" value="Asn/Gln-tRNA_amidoTrfase_suB/E"/>
</dbReference>
<dbReference type="InterPro" id="IPR006075">
    <property type="entry name" value="Asn/Gln-tRNA_Trfase_suB/E_cat"/>
</dbReference>
<dbReference type="InterPro" id="IPR018027">
    <property type="entry name" value="Asn/Gln_amidotransferase"/>
</dbReference>
<dbReference type="InterPro" id="IPR003789">
    <property type="entry name" value="Asn/Gln_tRNA_amidoTrase-B-like"/>
</dbReference>
<dbReference type="InterPro" id="IPR004413">
    <property type="entry name" value="GatB"/>
</dbReference>
<dbReference type="InterPro" id="IPR042114">
    <property type="entry name" value="GatB_C_1"/>
</dbReference>
<dbReference type="InterPro" id="IPR023168">
    <property type="entry name" value="GatB_Yqey_C_2"/>
</dbReference>
<dbReference type="InterPro" id="IPR017958">
    <property type="entry name" value="Gln-tRNA_amidoTrfase_suB_CS"/>
</dbReference>
<dbReference type="InterPro" id="IPR014746">
    <property type="entry name" value="Gln_synth/guanido_kin_cat_dom"/>
</dbReference>
<dbReference type="NCBIfam" id="TIGR00133">
    <property type="entry name" value="gatB"/>
    <property type="match status" value="1"/>
</dbReference>
<dbReference type="NCBIfam" id="NF004011">
    <property type="entry name" value="PRK05477.1-1"/>
    <property type="match status" value="1"/>
</dbReference>
<dbReference type="NCBIfam" id="NF004012">
    <property type="entry name" value="PRK05477.1-2"/>
    <property type="match status" value="1"/>
</dbReference>
<dbReference type="NCBIfam" id="NF004014">
    <property type="entry name" value="PRK05477.1-4"/>
    <property type="match status" value="1"/>
</dbReference>
<dbReference type="PANTHER" id="PTHR11659">
    <property type="entry name" value="GLUTAMYL-TRNA GLN AMIDOTRANSFERASE SUBUNIT B MITOCHONDRIAL AND PROKARYOTIC PET112-RELATED"/>
    <property type="match status" value="1"/>
</dbReference>
<dbReference type="PANTHER" id="PTHR11659:SF0">
    <property type="entry name" value="GLUTAMYL-TRNA(GLN) AMIDOTRANSFERASE SUBUNIT B, MITOCHONDRIAL"/>
    <property type="match status" value="1"/>
</dbReference>
<dbReference type="Pfam" id="PF02934">
    <property type="entry name" value="GatB_N"/>
    <property type="match status" value="1"/>
</dbReference>
<dbReference type="Pfam" id="PF02637">
    <property type="entry name" value="GatB_Yqey"/>
    <property type="match status" value="1"/>
</dbReference>
<dbReference type="SMART" id="SM00845">
    <property type="entry name" value="GatB_Yqey"/>
    <property type="match status" value="1"/>
</dbReference>
<dbReference type="SUPFAM" id="SSF89095">
    <property type="entry name" value="GatB/YqeY motif"/>
    <property type="match status" value="1"/>
</dbReference>
<dbReference type="SUPFAM" id="SSF55931">
    <property type="entry name" value="Glutamine synthetase/guanido kinase"/>
    <property type="match status" value="1"/>
</dbReference>
<dbReference type="PROSITE" id="PS01234">
    <property type="entry name" value="GATB"/>
    <property type="match status" value="1"/>
</dbReference>
<comment type="function">
    <text evidence="1">Allows the formation of correctly charged Asn-tRNA(Asn) or Gln-tRNA(Gln) through the transamidation of misacylated Asp-tRNA(Asn) or Glu-tRNA(Gln) in organisms which lack either or both of asparaginyl-tRNA or glutaminyl-tRNA synthetases. The reaction takes place in the presence of glutamine and ATP through an activated phospho-Asp-tRNA(Asn) or phospho-Glu-tRNA(Gln).</text>
</comment>
<comment type="catalytic activity">
    <reaction evidence="1">
        <text>L-glutamyl-tRNA(Gln) + L-glutamine + ATP + H2O = L-glutaminyl-tRNA(Gln) + L-glutamate + ADP + phosphate + H(+)</text>
        <dbReference type="Rhea" id="RHEA:17521"/>
        <dbReference type="Rhea" id="RHEA-COMP:9681"/>
        <dbReference type="Rhea" id="RHEA-COMP:9684"/>
        <dbReference type="ChEBI" id="CHEBI:15377"/>
        <dbReference type="ChEBI" id="CHEBI:15378"/>
        <dbReference type="ChEBI" id="CHEBI:29985"/>
        <dbReference type="ChEBI" id="CHEBI:30616"/>
        <dbReference type="ChEBI" id="CHEBI:43474"/>
        <dbReference type="ChEBI" id="CHEBI:58359"/>
        <dbReference type="ChEBI" id="CHEBI:78520"/>
        <dbReference type="ChEBI" id="CHEBI:78521"/>
        <dbReference type="ChEBI" id="CHEBI:456216"/>
    </reaction>
</comment>
<comment type="catalytic activity">
    <reaction evidence="1">
        <text>L-aspartyl-tRNA(Asn) + L-glutamine + ATP + H2O = L-asparaginyl-tRNA(Asn) + L-glutamate + ADP + phosphate + 2 H(+)</text>
        <dbReference type="Rhea" id="RHEA:14513"/>
        <dbReference type="Rhea" id="RHEA-COMP:9674"/>
        <dbReference type="Rhea" id="RHEA-COMP:9677"/>
        <dbReference type="ChEBI" id="CHEBI:15377"/>
        <dbReference type="ChEBI" id="CHEBI:15378"/>
        <dbReference type="ChEBI" id="CHEBI:29985"/>
        <dbReference type="ChEBI" id="CHEBI:30616"/>
        <dbReference type="ChEBI" id="CHEBI:43474"/>
        <dbReference type="ChEBI" id="CHEBI:58359"/>
        <dbReference type="ChEBI" id="CHEBI:78515"/>
        <dbReference type="ChEBI" id="CHEBI:78516"/>
        <dbReference type="ChEBI" id="CHEBI:456216"/>
    </reaction>
</comment>
<comment type="subunit">
    <text evidence="1">Heterotrimer of A, B and C subunits.</text>
</comment>
<comment type="interaction">
    <interactant intactId="EBI-2207023">
        <id>Q97SE7</id>
    </interactant>
    <interactant intactId="EBI-2206969">
        <id>Q97SU1</id>
        <label>adk</label>
    </interactant>
    <organismsDiffer>false</organismsDiffer>
    <experiments>2</experiments>
</comment>
<comment type="interaction">
    <interactant intactId="EBI-2207023">
        <id>Q97SE7</id>
    </interactant>
    <interactant intactId="EBI-2207316">
        <id>P63544</id>
        <label>apt</label>
    </interactant>
    <organismsDiffer>false</organismsDiffer>
    <experiments>2</experiments>
</comment>
<comment type="interaction">
    <interactant intactId="EBI-2207023">
        <id>Q97SE7</id>
    </interactant>
    <interactant intactId="EBI-2207206">
        <id>Q97QS2</id>
        <label>eno</label>
    </interactant>
    <organismsDiffer>false</organismsDiffer>
    <experiments>2</experiments>
</comment>
<comment type="interaction">
    <interactant intactId="EBI-2207023">
        <id>Q97SE7</id>
    </interactant>
    <interactant intactId="EBI-2207053">
        <id>Q97SE5</id>
        <label>gatC</label>
    </interactant>
    <organismsDiffer>false</organismsDiffer>
    <experiments>3</experiments>
</comment>
<comment type="interaction">
    <interactant intactId="EBI-2207023">
        <id>Q97SE7</id>
    </interactant>
    <interactant intactId="EBI-2206949">
        <id>Q97NV3</id>
        <label>groES</label>
    </interactant>
    <organismsDiffer>false</organismsDiffer>
    <experiments>2</experiments>
</comment>
<comment type="interaction">
    <interactant intactId="EBI-2207023">
        <id>Q97SE7</id>
    </interactant>
    <interactant intactId="EBI-2207999">
        <id>Q9X9S0</id>
        <label>pyrDA</label>
    </interactant>
    <organismsDiffer>false</organismsDiffer>
    <experiments>2</experiments>
</comment>
<comment type="interaction">
    <interactant intactId="EBI-2207023">
        <id>Q97SE7</id>
    </interactant>
    <interactant intactId="EBI-2206983">
        <id>Q97SR4</id>
        <label>uppS</label>
    </interactant>
    <organismsDiffer>false</organismsDiffer>
    <experiments>2</experiments>
</comment>
<comment type="similarity">
    <text evidence="1">Belongs to the GatB/GatE family. GatB subfamily.</text>
</comment>
<protein>
    <recommendedName>
        <fullName evidence="1">Aspartyl/glutamyl-tRNA(Asn/Gln) amidotransferase subunit B</fullName>
        <shortName evidence="1">Asp/Glu-ADT subunit B</shortName>
        <ecNumber evidence="1">6.3.5.-</ecNumber>
    </recommendedName>
</protein>